<keyword id="KW-0143">Chaperone</keyword>
<keyword id="KW-0963">Cytoplasm</keyword>
<keyword id="KW-1185">Reference proteome</keyword>
<keyword id="KW-0346">Stress response</keyword>
<protein>
    <recommendedName>
        <fullName evidence="1">Protein GrpE</fullName>
    </recommendedName>
    <alternativeName>
        <fullName evidence="1">HSP-70 cofactor</fullName>
    </alternativeName>
</protein>
<organism>
    <name type="scientific">Mycoplasma mycoides subsp. mycoides SC (strain CCUG 32753 / NCTC 10114 / PG1)</name>
    <dbReference type="NCBI Taxonomy" id="272632"/>
    <lineage>
        <taxon>Bacteria</taxon>
        <taxon>Bacillati</taxon>
        <taxon>Mycoplasmatota</taxon>
        <taxon>Mollicutes</taxon>
        <taxon>Mycoplasmataceae</taxon>
        <taxon>Mycoplasma</taxon>
    </lineage>
</organism>
<name>GRPE_MYCMS</name>
<feature type="chain" id="PRO_0000113818" description="Protein GrpE">
    <location>
        <begin position="1"/>
        <end position="200"/>
    </location>
</feature>
<accession>Q6MT05</accession>
<proteinExistence type="inferred from homology"/>
<dbReference type="EMBL" id="BX293980">
    <property type="protein sequence ID" value="CAE77233.1"/>
    <property type="status" value="ALT_INIT"/>
    <property type="molecule type" value="Genomic_DNA"/>
</dbReference>
<dbReference type="RefSeq" id="NP_975591.1">
    <property type="nucleotide sequence ID" value="NC_005364.2"/>
</dbReference>
<dbReference type="RefSeq" id="WP_015545681.1">
    <property type="nucleotide sequence ID" value="NC_005364.2"/>
</dbReference>
<dbReference type="SMR" id="Q6MT05"/>
<dbReference type="STRING" id="272632.MSC_0611"/>
<dbReference type="KEGG" id="mmy:MSC_0611"/>
<dbReference type="PATRIC" id="fig|272632.4.peg.658"/>
<dbReference type="eggNOG" id="COG0576">
    <property type="taxonomic scope" value="Bacteria"/>
</dbReference>
<dbReference type="HOGENOM" id="CLU_057217_4_2_14"/>
<dbReference type="Proteomes" id="UP000001016">
    <property type="component" value="Chromosome"/>
</dbReference>
<dbReference type="GO" id="GO:0005737">
    <property type="term" value="C:cytoplasm"/>
    <property type="evidence" value="ECO:0007669"/>
    <property type="project" value="UniProtKB-SubCell"/>
</dbReference>
<dbReference type="GO" id="GO:0000774">
    <property type="term" value="F:adenyl-nucleotide exchange factor activity"/>
    <property type="evidence" value="ECO:0007669"/>
    <property type="project" value="InterPro"/>
</dbReference>
<dbReference type="GO" id="GO:0042803">
    <property type="term" value="F:protein homodimerization activity"/>
    <property type="evidence" value="ECO:0007669"/>
    <property type="project" value="InterPro"/>
</dbReference>
<dbReference type="GO" id="GO:0051087">
    <property type="term" value="F:protein-folding chaperone binding"/>
    <property type="evidence" value="ECO:0007669"/>
    <property type="project" value="InterPro"/>
</dbReference>
<dbReference type="GO" id="GO:0051082">
    <property type="term" value="F:unfolded protein binding"/>
    <property type="evidence" value="ECO:0007669"/>
    <property type="project" value="TreeGrafter"/>
</dbReference>
<dbReference type="GO" id="GO:0006457">
    <property type="term" value="P:protein folding"/>
    <property type="evidence" value="ECO:0007669"/>
    <property type="project" value="InterPro"/>
</dbReference>
<dbReference type="CDD" id="cd00446">
    <property type="entry name" value="GrpE"/>
    <property type="match status" value="1"/>
</dbReference>
<dbReference type="Gene3D" id="3.90.20.20">
    <property type="match status" value="1"/>
</dbReference>
<dbReference type="Gene3D" id="2.30.22.10">
    <property type="entry name" value="Head domain of nucleotide exchange factor GrpE"/>
    <property type="match status" value="1"/>
</dbReference>
<dbReference type="HAMAP" id="MF_01151">
    <property type="entry name" value="GrpE"/>
    <property type="match status" value="1"/>
</dbReference>
<dbReference type="InterPro" id="IPR000740">
    <property type="entry name" value="GrpE"/>
</dbReference>
<dbReference type="InterPro" id="IPR013805">
    <property type="entry name" value="GrpE_coiled_coil"/>
</dbReference>
<dbReference type="InterPro" id="IPR009012">
    <property type="entry name" value="GrpE_head"/>
</dbReference>
<dbReference type="PANTHER" id="PTHR21237">
    <property type="entry name" value="GRPE PROTEIN"/>
    <property type="match status" value="1"/>
</dbReference>
<dbReference type="PANTHER" id="PTHR21237:SF23">
    <property type="entry name" value="GRPE PROTEIN HOMOLOG, MITOCHONDRIAL"/>
    <property type="match status" value="1"/>
</dbReference>
<dbReference type="Pfam" id="PF01025">
    <property type="entry name" value="GrpE"/>
    <property type="match status" value="1"/>
</dbReference>
<dbReference type="PRINTS" id="PR00773">
    <property type="entry name" value="GRPEPROTEIN"/>
</dbReference>
<dbReference type="SUPFAM" id="SSF58014">
    <property type="entry name" value="Coiled-coil domain of nucleotide exchange factor GrpE"/>
    <property type="match status" value="1"/>
</dbReference>
<dbReference type="SUPFAM" id="SSF51064">
    <property type="entry name" value="Head domain of nucleotide exchange factor GrpE"/>
    <property type="match status" value="1"/>
</dbReference>
<dbReference type="PROSITE" id="PS01071">
    <property type="entry name" value="GRPE"/>
    <property type="match status" value="1"/>
</dbReference>
<sequence length="200" mass="23086">MTEELKNKKINKKYYSQNRNKTKAEFQKADIKKNQYLNLKTKLNNVLLEVQNLKELNETLKKELKSEKQLNLAEISNLTKKYNQKELETKKYGASNLAKDLIQPLEILKKVVNAPNNNEVVQAYVKGFEMIINQINNVLESHHIKAMNVKVGDMFDPHLHDANEAVETDEYKTNQIVGVLSDGYMIHDKVLVYAIVKVAK</sequence>
<gene>
    <name evidence="1" type="primary">grpE</name>
    <name type="ordered locus">MSC_0611</name>
</gene>
<evidence type="ECO:0000255" key="1">
    <source>
        <dbReference type="HAMAP-Rule" id="MF_01151"/>
    </source>
</evidence>
<evidence type="ECO:0000305" key="2"/>
<comment type="function">
    <text evidence="1">Participates actively in the response to hyperosmotic and heat shock by preventing the aggregation of stress-denatured proteins, in association with DnaK and GrpE. It is the nucleotide exchange factor for DnaK and may function as a thermosensor. Unfolded proteins bind initially to DnaJ; upon interaction with the DnaJ-bound protein, DnaK hydrolyzes its bound ATP, resulting in the formation of a stable complex. GrpE releases ADP from DnaK; ATP binding to DnaK triggers the release of the substrate protein, thus completing the reaction cycle. Several rounds of ATP-dependent interactions between DnaJ, DnaK and GrpE are required for fully efficient folding.</text>
</comment>
<comment type="subunit">
    <text evidence="1">Homodimer.</text>
</comment>
<comment type="subcellular location">
    <subcellularLocation>
        <location evidence="1">Cytoplasm</location>
    </subcellularLocation>
</comment>
<comment type="similarity">
    <text evidence="1">Belongs to the GrpE family.</text>
</comment>
<comment type="sequence caution" evidence="2">
    <conflict type="erroneous initiation">
        <sequence resource="EMBL-CDS" id="CAE77233"/>
    </conflict>
</comment>
<reference key="1">
    <citation type="journal article" date="2004" name="Genome Res.">
        <title>The genome sequence of Mycoplasma mycoides subsp. mycoides SC type strain PG1T, the causative agent of contagious bovine pleuropneumonia (CBPP).</title>
        <authorList>
            <person name="Westberg J."/>
            <person name="Persson A."/>
            <person name="Holmberg A."/>
            <person name="Goesmann A."/>
            <person name="Lundeberg J."/>
            <person name="Johansson K.-E."/>
            <person name="Pettersson B."/>
            <person name="Uhlen M."/>
        </authorList>
    </citation>
    <scope>NUCLEOTIDE SEQUENCE [LARGE SCALE GENOMIC DNA]</scope>
    <source>
        <strain>CCUG 32753 / NCTC 10114 / PG1</strain>
    </source>
</reference>